<proteinExistence type="inferred from homology"/>
<dbReference type="EC" id="2.7.7.7" evidence="1"/>
<dbReference type="EMBL" id="CR555306">
    <property type="protein sequence ID" value="CAI07859.1"/>
    <property type="molecule type" value="Genomic_DNA"/>
</dbReference>
<dbReference type="RefSeq" id="WP_011237573.1">
    <property type="nucleotide sequence ID" value="NC_006513.1"/>
</dbReference>
<dbReference type="SMR" id="Q5P4A4"/>
<dbReference type="STRING" id="76114.ebA3077"/>
<dbReference type="KEGG" id="eba:ebA3077"/>
<dbReference type="eggNOG" id="COG0587">
    <property type="taxonomic scope" value="Bacteria"/>
</dbReference>
<dbReference type="HOGENOM" id="CLU_001600_4_0_4"/>
<dbReference type="OrthoDB" id="9803237at2"/>
<dbReference type="Proteomes" id="UP000006552">
    <property type="component" value="Chromosome"/>
</dbReference>
<dbReference type="GO" id="GO:0005737">
    <property type="term" value="C:cytoplasm"/>
    <property type="evidence" value="ECO:0007669"/>
    <property type="project" value="UniProtKB-SubCell"/>
</dbReference>
<dbReference type="GO" id="GO:0008408">
    <property type="term" value="F:3'-5' exonuclease activity"/>
    <property type="evidence" value="ECO:0007669"/>
    <property type="project" value="InterPro"/>
</dbReference>
<dbReference type="GO" id="GO:0003887">
    <property type="term" value="F:DNA-directed DNA polymerase activity"/>
    <property type="evidence" value="ECO:0007669"/>
    <property type="project" value="UniProtKB-UniRule"/>
</dbReference>
<dbReference type="GO" id="GO:0006281">
    <property type="term" value="P:DNA repair"/>
    <property type="evidence" value="ECO:0007669"/>
    <property type="project" value="UniProtKB-UniRule"/>
</dbReference>
<dbReference type="GO" id="GO:0006260">
    <property type="term" value="P:DNA replication"/>
    <property type="evidence" value="ECO:0007669"/>
    <property type="project" value="UniProtKB-KW"/>
</dbReference>
<dbReference type="CDD" id="cd04485">
    <property type="entry name" value="DnaE_OBF"/>
    <property type="match status" value="1"/>
</dbReference>
<dbReference type="CDD" id="cd07434">
    <property type="entry name" value="PHP_PolIIIA_DnaE2"/>
    <property type="match status" value="1"/>
</dbReference>
<dbReference type="FunFam" id="1.10.150.870:FF:000002">
    <property type="entry name" value="Error-prone DNA polymerase"/>
    <property type="match status" value="1"/>
</dbReference>
<dbReference type="Gene3D" id="1.10.150.870">
    <property type="match status" value="1"/>
</dbReference>
<dbReference type="Gene3D" id="3.20.20.140">
    <property type="entry name" value="Metal-dependent hydrolases"/>
    <property type="match status" value="1"/>
</dbReference>
<dbReference type="HAMAP" id="MF_01902">
    <property type="entry name" value="DNApol_error_prone"/>
    <property type="match status" value="1"/>
</dbReference>
<dbReference type="InterPro" id="IPR011708">
    <property type="entry name" value="DNA_pol3_alpha_NTPase_dom"/>
</dbReference>
<dbReference type="InterPro" id="IPR040982">
    <property type="entry name" value="DNA_pol3_finger"/>
</dbReference>
<dbReference type="InterPro" id="IPR023073">
    <property type="entry name" value="DnaE2"/>
</dbReference>
<dbReference type="InterPro" id="IPR004805">
    <property type="entry name" value="DnaE2/DnaE/PolC"/>
</dbReference>
<dbReference type="InterPro" id="IPR029460">
    <property type="entry name" value="DNAPol_HHH"/>
</dbReference>
<dbReference type="InterPro" id="IPR004013">
    <property type="entry name" value="PHP_dom"/>
</dbReference>
<dbReference type="InterPro" id="IPR003141">
    <property type="entry name" value="Pol/His_phosphatase_N"/>
</dbReference>
<dbReference type="InterPro" id="IPR016195">
    <property type="entry name" value="Pol/histidinol_Pase-like"/>
</dbReference>
<dbReference type="NCBIfam" id="TIGR00594">
    <property type="entry name" value="polc"/>
    <property type="match status" value="1"/>
</dbReference>
<dbReference type="NCBIfam" id="NF004225">
    <property type="entry name" value="PRK05672.1"/>
    <property type="match status" value="1"/>
</dbReference>
<dbReference type="PANTHER" id="PTHR32294">
    <property type="entry name" value="DNA POLYMERASE III SUBUNIT ALPHA"/>
    <property type="match status" value="1"/>
</dbReference>
<dbReference type="PANTHER" id="PTHR32294:SF4">
    <property type="entry name" value="ERROR-PRONE DNA POLYMERASE"/>
    <property type="match status" value="1"/>
</dbReference>
<dbReference type="Pfam" id="PF07733">
    <property type="entry name" value="DNA_pol3_alpha"/>
    <property type="match status" value="1"/>
</dbReference>
<dbReference type="Pfam" id="PF17657">
    <property type="entry name" value="DNA_pol3_finger"/>
    <property type="match status" value="1"/>
</dbReference>
<dbReference type="Pfam" id="PF14579">
    <property type="entry name" value="HHH_6"/>
    <property type="match status" value="1"/>
</dbReference>
<dbReference type="Pfam" id="PF02811">
    <property type="entry name" value="PHP"/>
    <property type="match status" value="1"/>
</dbReference>
<dbReference type="SMART" id="SM00481">
    <property type="entry name" value="POLIIIAc"/>
    <property type="match status" value="1"/>
</dbReference>
<dbReference type="SUPFAM" id="SSF89550">
    <property type="entry name" value="PHP domain-like"/>
    <property type="match status" value="1"/>
</dbReference>
<protein>
    <recommendedName>
        <fullName evidence="1">Error-prone DNA polymerase</fullName>
        <ecNumber evidence="1">2.7.7.7</ecNumber>
    </recommendedName>
</protein>
<comment type="function">
    <text evidence="1">DNA polymerase involved in damage-induced mutagenesis and translesion synthesis (TLS). It is not the major replicative DNA polymerase.</text>
</comment>
<comment type="catalytic activity">
    <reaction evidence="1">
        <text>DNA(n) + a 2'-deoxyribonucleoside 5'-triphosphate = DNA(n+1) + diphosphate</text>
        <dbReference type="Rhea" id="RHEA:22508"/>
        <dbReference type="Rhea" id="RHEA-COMP:17339"/>
        <dbReference type="Rhea" id="RHEA-COMP:17340"/>
        <dbReference type="ChEBI" id="CHEBI:33019"/>
        <dbReference type="ChEBI" id="CHEBI:61560"/>
        <dbReference type="ChEBI" id="CHEBI:173112"/>
        <dbReference type="EC" id="2.7.7.7"/>
    </reaction>
</comment>
<comment type="subcellular location">
    <subcellularLocation>
        <location evidence="1">Cytoplasm</location>
    </subcellularLocation>
</comment>
<comment type="similarity">
    <text evidence="1">Belongs to the DNA polymerase type-C family. DnaE2 subfamily.</text>
</comment>
<gene>
    <name evidence="1" type="primary">dnaE2</name>
    <name type="ordered locus">AZOSEA17340</name>
    <name type="ORF">ebA3077</name>
</gene>
<evidence type="ECO:0000255" key="1">
    <source>
        <dbReference type="HAMAP-Rule" id="MF_01902"/>
    </source>
</evidence>
<accession>Q5P4A4</accession>
<reference key="1">
    <citation type="journal article" date="2005" name="Arch. Microbiol.">
        <title>The genome sequence of an anaerobic aromatic-degrading denitrifying bacterium, strain EbN1.</title>
        <authorList>
            <person name="Rabus R."/>
            <person name="Kube M."/>
            <person name="Heider J."/>
            <person name="Beck A."/>
            <person name="Heitmann K."/>
            <person name="Widdel F."/>
            <person name="Reinhardt R."/>
        </authorList>
    </citation>
    <scope>NUCLEOTIDE SEQUENCE [LARGE SCALE GENOMIC DNA]</scope>
    <source>
        <strain>DSM 19018 / LMG 30748 / EbN1</strain>
    </source>
</reference>
<feature type="chain" id="PRO_0000103365" description="Error-prone DNA polymerase">
    <location>
        <begin position="1"/>
        <end position="1070"/>
    </location>
</feature>
<organism>
    <name type="scientific">Aromatoleum aromaticum (strain DSM 19018 / LMG 30748 / EbN1)</name>
    <name type="common">Azoarcus sp. (strain EbN1)</name>
    <dbReference type="NCBI Taxonomy" id="76114"/>
    <lineage>
        <taxon>Bacteria</taxon>
        <taxon>Pseudomonadati</taxon>
        <taxon>Pseudomonadota</taxon>
        <taxon>Betaproteobacteria</taxon>
        <taxon>Rhodocyclales</taxon>
        <taxon>Rhodocyclaceae</taxon>
        <taxon>Aromatoleum</taxon>
    </lineage>
</organism>
<keyword id="KW-0963">Cytoplasm</keyword>
<keyword id="KW-0227">DNA damage</keyword>
<keyword id="KW-0234">DNA repair</keyword>
<keyword id="KW-0235">DNA replication</keyword>
<keyword id="KW-0239">DNA-directed DNA polymerase</keyword>
<keyword id="KW-0548">Nucleotidyltransferase</keyword>
<keyword id="KW-1185">Reference proteome</keyword>
<keyword id="KW-0808">Transferase</keyword>
<sequence>MDSAPPSPSPSPAPAYAELHCLTNFSFQRGASHPEELVARAAEAGYTALAITDECSLAGVVRAHQQLRRLARPLKLLIGSELRLVDGLRVVLLATDRAAYGRLARLITIGRRAATKGRYQLTCADLDRGIPGCLALVVPPDDRILDAAALVADARWVGERFPDAAWLAVELACGPDDGRRLEALLAIASAAGLPPVAATGALMHDPSRRALADVLAALRLRVTIAEAGRALAPNAERALHERAVLARRYPAELLAETLRIVARCHFRLDELRYEYPAELVPDGETPASWLRRLVEDGLRWRHGRPQDDLAPPKVRAQVEHELALIAELGFEAYFLTVEDLVRFARGRGILCQGRGSAANSVICWALGITEVDPELGIMLVERFISKERDEPPDIDVDFEHERREEVIQYVYRKYGRERAALAATVIRYRARSALRDVGRALGLPPGQLERLARDRFWFDAGRIRPERLREAGFDPASPGVQRLATLTEALVGFPRHLSQHVGGFVIARGRLDELVPVENAAMPERTVIQWDKDDLDALGLLKIDVLALGMLSALRRSLALVSTWRGRPFTLADIPREAPEVYRMLSEADSIGVFQIESRAQMTMLPRLKPARFYDLVVQVAIVRPGPIQGGMVHPYLQARARIERDEPVSYPQPHCPDADADGTCVPRPDDVRRVLERTLGVPIFQEQVMQLAVVAAGFTPGEADQLRRAMGAFRRHGELERYRAKLLAGMAARGYRAEFAERLCDQIEGFGSYGFPESHAASFALLVYCSAWLKCCEPAAFLCGLLNSQPMGFYAPSQLIQDARRHGVVVLGAEVTASDWDCTLEALPDASPGAAPAVRLGLQLVKGFGREAAMRIVAARTERPFPNVDELALRARLDAAALKRLAEAGALEPLAGHRRQALWQAAAGHAPEGVLRGARIAEPRAELAAPSEAQELVADYARLGFTLGRHPLALLRAKLTTLRFVTAAEIRDYPDRKLARIAGLVTCRQRPGTAKGTLFLTVEDETGLANVIVQAELVERQRREVLGARLLGVFGQIRSKGQVVHLLAQRLVDHSALLGALEARSRDFQ</sequence>
<name>DNAE2_AROAE</name>